<comment type="function">
    <text evidence="6 7">Throughout most of the cell cycle it forms a double ring that coincides with the septins. After the onset of mitosis, forms a ring-like structure which colocalizes with the medial actin ring. Mediates cytoskeletal rearrangements required for cytokinesis. In conjunction with the medial actin ring exhibits contraction-like action.</text>
</comment>
<comment type="subunit">
    <text evidence="6 7">Interacts with INN1.</text>
</comment>
<comment type="interaction">
    <interactant intactId="EBI-5412">
        <id>Q05080</id>
    </interactant>
    <interactant intactId="EBI-28798">
        <id>P53933</id>
        <label>APP1</label>
    </interactant>
    <organismsDiffer>false</organismsDiffer>
    <experiments>2</experiments>
</comment>
<comment type="interaction">
    <interactant intactId="EBI-5412">
        <id>Q05080</id>
    </interactant>
    <interactant intactId="EBI-3711">
        <id>P40450</id>
        <label>BNR1</label>
    </interactant>
    <organismsDiffer>false</organismsDiffer>
    <experiments>5</experiments>
</comment>
<comment type="interaction">
    <interactant intactId="EBI-5412">
        <id>Q05080</id>
    </interactant>
    <interactant intactId="EBI-31510">
        <id>Q07533</id>
        <label>CYK3</label>
    </interactant>
    <organismsDiffer>false</organismsDiffer>
    <experiments>5</experiments>
</comment>
<comment type="interaction">
    <interactant intactId="EBI-5412">
        <id>Q05080</id>
    </interactant>
    <interactant intactId="EBI-5412">
        <id>Q05080</id>
        <label>HOF1</label>
    </interactant>
    <organismsDiffer>false</organismsDiffer>
    <experiments>3</experiments>
</comment>
<comment type="interaction">
    <interactant intactId="EBI-5412">
        <id>Q05080</id>
    </interactant>
    <interactant intactId="EBI-28955">
        <id>P53901</id>
        <label>INN1</label>
    </interactant>
    <organismsDiffer>false</organismsDiffer>
    <experiments>6</experiments>
</comment>
<comment type="interaction">
    <interactant intactId="EBI-5412">
        <id>Q05080</id>
    </interactant>
    <interactant intactId="EBI-10022">
        <id>Q12446</id>
        <label>LAS17</label>
    </interactant>
    <organismsDiffer>false</organismsDiffer>
    <experiments>3</experiments>
</comment>
<comment type="interaction">
    <interactant intactId="EBI-5412">
        <id>Q05080</id>
    </interactant>
    <interactant intactId="EBI-16463">
        <id>P39955</id>
        <label>SAP1</label>
    </interactant>
    <organismsDiffer>false</organismsDiffer>
    <experiments>4</experiments>
</comment>
<comment type="interaction">
    <interactant intactId="EBI-5412">
        <id>Q05080</id>
    </interactant>
    <interactant intactId="EBI-18140">
        <id>P40073</id>
        <label>SHO1</label>
    </interactant>
    <organismsDiffer>false</organismsDiffer>
    <experiments>5</experiments>
</comment>
<comment type="interaction">
    <interactant intactId="EBI-5412">
        <id>Q05080</id>
    </interactant>
    <interactant intactId="EBI-411625">
        <id>P25604</id>
        <label>STP22</label>
    </interactant>
    <organismsDiffer>false</organismsDiffer>
    <experiments>2</experiments>
</comment>
<comment type="interaction">
    <interactant intactId="EBI-5412">
        <id>Q05080</id>
    </interactant>
    <interactant intactId="EBI-19857">
        <id>P40453</id>
        <label>UBP7</label>
    </interactant>
    <organismsDiffer>false</organismsDiffer>
    <experiments>2</experiments>
</comment>
<comment type="interaction">
    <interactant intactId="EBI-5412">
        <id>Q05080</id>
    </interactant>
    <interactant intactId="EBI-20502">
        <id>P37370</id>
        <label>VRP1</label>
    </interactant>
    <organismsDiffer>false</organismsDiffer>
    <experiments>4</experiments>
</comment>
<comment type="interaction">
    <interactant intactId="EBI-5412">
        <id>Q05080</id>
    </interactant>
    <interactant intactId="EBI-23796">
        <id>P53169</id>
        <label>YBP2</label>
    </interactant>
    <organismsDiffer>false</organismsDiffer>
    <experiments>2</experiments>
</comment>
<comment type="subcellular location">
    <subcellularLocation>
        <location>Cytoplasm</location>
        <location>Cytoskeleton</location>
    </subcellularLocation>
    <subcellularLocation>
        <location>Bud neck</location>
    </subcellularLocation>
</comment>
<comment type="miscellaneous">
    <text evidence="5">Present with 195 molecules/cell in log phase SD medium.</text>
</comment>
<reference key="1">
    <citation type="journal article" date="1997" name="Nature">
        <title>The nucleotide sequence of Saccharomyces cerevisiae chromosome XIII.</title>
        <authorList>
            <person name="Bowman S."/>
            <person name="Churcher C.M."/>
            <person name="Badcock K."/>
            <person name="Brown D."/>
            <person name="Chillingworth T."/>
            <person name="Connor R."/>
            <person name="Dedman K."/>
            <person name="Devlin K."/>
            <person name="Gentles S."/>
            <person name="Hamlin N."/>
            <person name="Hunt S."/>
            <person name="Jagels K."/>
            <person name="Lye G."/>
            <person name="Moule S."/>
            <person name="Odell C."/>
            <person name="Pearson D."/>
            <person name="Rajandream M.A."/>
            <person name="Rice P."/>
            <person name="Skelton J."/>
            <person name="Walsh S.V."/>
            <person name="Whitehead S."/>
            <person name="Barrell B.G."/>
        </authorList>
    </citation>
    <scope>NUCLEOTIDE SEQUENCE [LARGE SCALE GENOMIC DNA]</scope>
    <source>
        <strain>ATCC 204508 / S288c</strain>
    </source>
</reference>
<reference key="2">
    <citation type="journal article" date="2014" name="G3 (Bethesda)">
        <title>The reference genome sequence of Saccharomyces cerevisiae: Then and now.</title>
        <authorList>
            <person name="Engel S.R."/>
            <person name="Dietrich F.S."/>
            <person name="Fisk D.G."/>
            <person name="Binkley G."/>
            <person name="Balakrishnan R."/>
            <person name="Costanzo M.C."/>
            <person name="Dwight S.S."/>
            <person name="Hitz B.C."/>
            <person name="Karra K."/>
            <person name="Nash R.S."/>
            <person name="Weng S."/>
            <person name="Wong E.D."/>
            <person name="Lloyd P."/>
            <person name="Skrzypek M.S."/>
            <person name="Miyasato S.R."/>
            <person name="Simison M."/>
            <person name="Cherry J.M."/>
        </authorList>
    </citation>
    <scope>GENOME REANNOTATION</scope>
    <source>
        <strain>ATCC 204508 / S288c</strain>
    </source>
</reference>
<reference key="3">
    <citation type="journal article" date="1998" name="J. Cell Biol.">
        <title>Dual function of Cyk2, a cdc15/PSTPIP family protein, in regulating actomyosin ring dynamics and septin distribution.</title>
        <authorList>
            <person name="Lippincott J."/>
            <person name="Li R."/>
        </authorList>
    </citation>
    <scope>CHARACTERIZATION</scope>
</reference>
<reference key="4">
    <citation type="journal article" date="2003" name="Nature">
        <title>Global analysis of protein expression in yeast.</title>
        <authorList>
            <person name="Ghaemmaghami S."/>
            <person name="Huh W.-K."/>
            <person name="Bower K."/>
            <person name="Howson R.W."/>
            <person name="Belle A."/>
            <person name="Dephoure N."/>
            <person name="O'Shea E.K."/>
            <person name="Weissman J.S."/>
        </authorList>
    </citation>
    <scope>LEVEL OF PROTEIN EXPRESSION [LARGE SCALE ANALYSIS]</scope>
</reference>
<reference key="5">
    <citation type="journal article" date="2008" name="Mol. Cell. Proteomics">
        <title>A multidimensional chromatography technology for in-depth phosphoproteome analysis.</title>
        <authorList>
            <person name="Albuquerque C.P."/>
            <person name="Smolka M.B."/>
            <person name="Payne S.H."/>
            <person name="Bafna V."/>
            <person name="Eng J."/>
            <person name="Zhou H."/>
        </authorList>
    </citation>
    <scope>IDENTIFICATION BY MASS SPECTROMETRY [LARGE SCALE ANALYSIS]</scope>
</reference>
<reference key="6">
    <citation type="journal article" date="2008" name="Nat. Cell Biol.">
        <title>Inn1 couples contraction of the actomyosin ring to membrane ingression during cytokinesis in budding yeast.</title>
        <authorList>
            <person name="Sanchez-Diaz A."/>
            <person name="Marchesi V."/>
            <person name="Murray S."/>
            <person name="Jones R."/>
            <person name="Pereira G."/>
            <person name="Edmondson R."/>
            <person name="Allen T."/>
            <person name="Labib K."/>
        </authorList>
    </citation>
    <scope>SUBCELLULAR LOCATION</scope>
    <scope>FUNCTION</scope>
    <scope>INTERACTION WITH INN1</scope>
</reference>
<reference key="7">
    <citation type="journal article" date="2009" name="J. Cell Biol.">
        <title>Role of Inn1 and its interactions with Hof1 and Cyk3 in promoting cleavage furrow and septum formation in S. cerevisiae.</title>
        <authorList>
            <person name="Nishihama R."/>
            <person name="Schreiter J.H."/>
            <person name="Onishi M."/>
            <person name="Vallen E.A."/>
            <person name="Hanna J."/>
            <person name="Moravcevic K."/>
            <person name="Lippincott M.F."/>
            <person name="Han H."/>
            <person name="Lemmon M.A."/>
            <person name="Pringle J.R."/>
            <person name="Bi E."/>
        </authorList>
    </citation>
    <scope>SUBCELLULAR LOCATION</scope>
    <scope>FUNCTION</scope>
    <scope>INTERACTION WITH INN1</scope>
</reference>
<reference key="8">
    <citation type="journal article" date="2009" name="Science">
        <title>Global analysis of Cdk1 substrate phosphorylation sites provides insights into evolution.</title>
        <authorList>
            <person name="Holt L.J."/>
            <person name="Tuch B.B."/>
            <person name="Villen J."/>
            <person name="Johnson A.D."/>
            <person name="Gygi S.P."/>
            <person name="Morgan D.O."/>
        </authorList>
    </citation>
    <scope>PHOSPHORYLATION [LARGE SCALE ANALYSIS] AT SER-337; SER-366 AND SER-421</scope>
    <scope>IDENTIFICATION BY MASS SPECTROMETRY [LARGE SCALE ANALYSIS]</scope>
</reference>
<proteinExistence type="evidence at protein level"/>
<organism>
    <name type="scientific">Saccharomyces cerevisiae (strain ATCC 204508 / S288c)</name>
    <name type="common">Baker's yeast</name>
    <dbReference type="NCBI Taxonomy" id="559292"/>
    <lineage>
        <taxon>Eukaryota</taxon>
        <taxon>Fungi</taxon>
        <taxon>Dikarya</taxon>
        <taxon>Ascomycota</taxon>
        <taxon>Saccharomycotina</taxon>
        <taxon>Saccharomycetes</taxon>
        <taxon>Saccharomycetales</taxon>
        <taxon>Saccharomycetaceae</taxon>
        <taxon>Saccharomyces</taxon>
    </lineage>
</organism>
<sequence length="669" mass="76207">MSYSYEACFWDPNDNGVNILLGHISQGIRSCDSMILFFKQRSELEKDYARRLGAITGKLDKDIGTNMDYGKLNETFNVVLSVEKARAQSHSKQSEILFRQIYTDTKAFAANLQARYTTLSGKIERLRMDKFNKKKGCEVLQKKLQDAQIRFRDLQLNENNMIGAKRVEHNKRELLKWESNSQEYKVQLDVLKQEYKASQKFWIHEWAQLSCELQEMENARISFLQSKLQQFATSSMETYILEQTKMDMLTNHLNSFTAADEISTFSKENGTGRLKHKTSKGDMNSSANWAQMSSISTTSKKTESYMDNIRKLSSQLKETENKRKLASIDKYEKPLPSPEVTMATQFRNSTPVIRNETKVVANPTLSLRSSPVQLQSNVDDSVLRQKPDKPRPIVGEEQLKPDEDSKNPDEKGLMVHKRNQSLSSPSESSSSNPTDFSHIKKRQSMESMTTSVSSMANSIDDSQRFAKSWNSSNRKRKSMSHLQVPSSASSRSDDGGRTPNSAHNLNEDDYNTRRDTSTSTILFKPPVAVRGTSRGHTHRQSMIMQDSSNPIEDALYEMERIQSSSKPGTKTGNIMDERGVVRDRGITVTLPIVTSEGFPVIEYAKAMYPLIGNEAPGLANFHKGDYLLITEIVNKDWYKGEVYDNDRIDRNHRIGLIPYNFIQLLHQGL</sequence>
<accession>Q05080</accession>
<accession>D6VZK6</accession>
<keyword id="KW-0002">3D-structure</keyword>
<keyword id="KW-0131">Cell cycle</keyword>
<keyword id="KW-0132">Cell division</keyword>
<keyword id="KW-0175">Coiled coil</keyword>
<keyword id="KW-0963">Cytoplasm</keyword>
<keyword id="KW-0206">Cytoskeleton</keyword>
<keyword id="KW-0498">Mitosis</keyword>
<keyword id="KW-0597">Phosphoprotein</keyword>
<keyword id="KW-1185">Reference proteome</keyword>
<keyword id="KW-0728">SH3 domain</keyword>
<dbReference type="EMBL" id="Z49213">
    <property type="protein sequence ID" value="CAA89147.1"/>
    <property type="molecule type" value="Genomic_DNA"/>
</dbReference>
<dbReference type="EMBL" id="BK006946">
    <property type="protein sequence ID" value="DAA09930.1"/>
    <property type="molecule type" value="Genomic_DNA"/>
</dbReference>
<dbReference type="PIR" id="S53948">
    <property type="entry name" value="S53948"/>
</dbReference>
<dbReference type="RefSeq" id="NP_013746.1">
    <property type="nucleotide sequence ID" value="NM_001182529.1"/>
</dbReference>
<dbReference type="PDB" id="4WPE">
    <property type="method" value="X-ray"/>
    <property type="resolution" value="2.70 A"/>
    <property type="chains" value="A=2-300"/>
</dbReference>
<dbReference type="PDBsum" id="4WPE"/>
<dbReference type="SMR" id="Q05080"/>
<dbReference type="BioGRID" id="35204">
    <property type="interactions" value="451"/>
</dbReference>
<dbReference type="ComplexPortal" id="CPX-1140">
    <property type="entry name" value="HICS complex"/>
</dbReference>
<dbReference type="ComplexPortal" id="CPX-3503">
    <property type="entry name" value="MIH complex"/>
</dbReference>
<dbReference type="DIP" id="DIP-2729N"/>
<dbReference type="FunCoup" id="Q05080">
    <property type="interactions" value="121"/>
</dbReference>
<dbReference type="IntAct" id="Q05080">
    <property type="interactions" value="69"/>
</dbReference>
<dbReference type="MINT" id="Q05080"/>
<dbReference type="STRING" id="4932.YMR032W"/>
<dbReference type="MoonDB" id="Q05080">
    <property type="type" value="Predicted"/>
</dbReference>
<dbReference type="iPTMnet" id="Q05080"/>
<dbReference type="PaxDb" id="4932-YMR032W"/>
<dbReference type="PeptideAtlas" id="Q05080"/>
<dbReference type="EnsemblFungi" id="YMR032W_mRNA">
    <property type="protein sequence ID" value="YMR032W"/>
    <property type="gene ID" value="YMR032W"/>
</dbReference>
<dbReference type="GeneID" id="855048"/>
<dbReference type="KEGG" id="sce:YMR032W"/>
<dbReference type="AGR" id="SGD:S000004635"/>
<dbReference type="SGD" id="S000004635">
    <property type="gene designation" value="HOF1"/>
</dbReference>
<dbReference type="VEuPathDB" id="FungiDB:YMR032W"/>
<dbReference type="eggNOG" id="KOG2398">
    <property type="taxonomic scope" value="Eukaryota"/>
</dbReference>
<dbReference type="HOGENOM" id="CLU_434790_0_0_1"/>
<dbReference type="InParanoid" id="Q05080"/>
<dbReference type="OMA" id="RFAKSWN"/>
<dbReference type="OrthoDB" id="27823at2759"/>
<dbReference type="BioCyc" id="YEAST:G3O-32737-MONOMER"/>
<dbReference type="Reactome" id="R-SCE-8856828">
    <property type="pathway name" value="Clathrin-mediated endocytosis"/>
</dbReference>
<dbReference type="BioGRID-ORCS" id="855048">
    <property type="hits" value="0 hits in 10 CRISPR screens"/>
</dbReference>
<dbReference type="EvolutionaryTrace" id="Q05080"/>
<dbReference type="PRO" id="PR:Q05080"/>
<dbReference type="Proteomes" id="UP000002311">
    <property type="component" value="Chromosome XIII"/>
</dbReference>
<dbReference type="RNAct" id="Q05080">
    <property type="molecule type" value="protein"/>
</dbReference>
<dbReference type="GO" id="GO:0005938">
    <property type="term" value="C:cell cortex"/>
    <property type="evidence" value="ECO:0000314"/>
    <property type="project" value="SGD"/>
</dbReference>
<dbReference type="GO" id="GO:0032153">
    <property type="term" value="C:cell division site"/>
    <property type="evidence" value="ECO:0000318"/>
    <property type="project" value="GO_Central"/>
</dbReference>
<dbReference type="GO" id="GO:0005935">
    <property type="term" value="C:cellular bud neck"/>
    <property type="evidence" value="ECO:0000314"/>
    <property type="project" value="SGD"/>
</dbReference>
<dbReference type="GO" id="GO:0000142">
    <property type="term" value="C:cellular bud neck contractile ring"/>
    <property type="evidence" value="ECO:0000314"/>
    <property type="project" value="SGD"/>
</dbReference>
<dbReference type="GO" id="GO:0000144">
    <property type="term" value="C:cellular bud neck septin ring"/>
    <property type="evidence" value="ECO:0000314"/>
    <property type="project" value="SGD"/>
</dbReference>
<dbReference type="GO" id="GO:0005737">
    <property type="term" value="C:cytoplasm"/>
    <property type="evidence" value="ECO:0000318"/>
    <property type="project" value="GO_Central"/>
</dbReference>
<dbReference type="GO" id="GO:0009898">
    <property type="term" value="C:cytoplasmic side of plasma membrane"/>
    <property type="evidence" value="ECO:0000318"/>
    <property type="project" value="GO_Central"/>
</dbReference>
<dbReference type="GO" id="GO:0044697">
    <property type="term" value="C:HICS complex"/>
    <property type="evidence" value="ECO:0000353"/>
    <property type="project" value="SGD"/>
</dbReference>
<dbReference type="GO" id="GO:0016020">
    <property type="term" value="C:membrane"/>
    <property type="evidence" value="ECO:0000303"/>
    <property type="project" value="ComplexPortal"/>
</dbReference>
<dbReference type="GO" id="GO:0120155">
    <property type="term" value="C:MIH complex"/>
    <property type="evidence" value="ECO:0000314"/>
    <property type="project" value="SGD"/>
</dbReference>
<dbReference type="GO" id="GO:0120104">
    <property type="term" value="C:mitotic actomyosin contractile ring, proximal layer"/>
    <property type="evidence" value="ECO:0000318"/>
    <property type="project" value="GO_Central"/>
</dbReference>
<dbReference type="GO" id="GO:0005886">
    <property type="term" value="C:plasma membrane"/>
    <property type="evidence" value="ECO:0000303"/>
    <property type="project" value="ComplexPortal"/>
</dbReference>
<dbReference type="GO" id="GO:0030427">
    <property type="term" value="C:site of polarized growth"/>
    <property type="evidence" value="ECO:0000314"/>
    <property type="project" value="SGD"/>
</dbReference>
<dbReference type="GO" id="GO:0051015">
    <property type="term" value="F:actin filament binding"/>
    <property type="evidence" value="ECO:0000314"/>
    <property type="project" value="SGD"/>
</dbReference>
<dbReference type="GO" id="GO:0008092">
    <property type="term" value="F:cytoskeletal protein binding"/>
    <property type="evidence" value="ECO:0000314"/>
    <property type="project" value="SGD"/>
</dbReference>
<dbReference type="GO" id="GO:0042802">
    <property type="term" value="F:identical protein binding"/>
    <property type="evidence" value="ECO:0000353"/>
    <property type="project" value="IntAct"/>
</dbReference>
<dbReference type="GO" id="GO:0032038">
    <property type="term" value="F:myosin II heavy chain binding"/>
    <property type="evidence" value="ECO:0000353"/>
    <property type="project" value="SGD"/>
</dbReference>
<dbReference type="GO" id="GO:0005543">
    <property type="term" value="F:phospholipid binding"/>
    <property type="evidence" value="ECO:0000314"/>
    <property type="project" value="SGD"/>
</dbReference>
<dbReference type="GO" id="GO:0044877">
    <property type="term" value="F:protein-containing complex binding"/>
    <property type="evidence" value="ECO:0000314"/>
    <property type="project" value="SGD"/>
</dbReference>
<dbReference type="GO" id="GO:0051017">
    <property type="term" value="P:actin filament bundle assembly"/>
    <property type="evidence" value="ECO:0000314"/>
    <property type="project" value="SGD"/>
</dbReference>
<dbReference type="GO" id="GO:0007010">
    <property type="term" value="P:cytoskeleton organization"/>
    <property type="evidence" value="ECO:0000318"/>
    <property type="project" value="GO_Central"/>
</dbReference>
<dbReference type="GO" id="GO:1903475">
    <property type="term" value="P:mitotic actomyosin contractile ring assembly"/>
    <property type="evidence" value="ECO:0000315"/>
    <property type="project" value="SGD"/>
</dbReference>
<dbReference type="GO" id="GO:1902404">
    <property type="term" value="P:mitotic actomyosin contractile ring contraction"/>
    <property type="evidence" value="ECO:0000315"/>
    <property type="project" value="SGD"/>
</dbReference>
<dbReference type="GO" id="GO:0000281">
    <property type="term" value="P:mitotic cytokinesis"/>
    <property type="evidence" value="ECO:0000315"/>
    <property type="project" value="SGD"/>
</dbReference>
<dbReference type="GO" id="GO:1902410">
    <property type="term" value="P:mitotic cytokinetic process"/>
    <property type="evidence" value="ECO:0000303"/>
    <property type="project" value="ComplexPortal"/>
</dbReference>
<dbReference type="GO" id="GO:0051126">
    <property type="term" value="P:negative regulation of actin nucleation"/>
    <property type="evidence" value="ECO:0000314"/>
    <property type="project" value="SGD"/>
</dbReference>
<dbReference type="GO" id="GO:0090339">
    <property type="term" value="P:negative regulation of formin-nucleated actin cable assembly"/>
    <property type="evidence" value="ECO:0000315"/>
    <property type="project" value="SGD"/>
</dbReference>
<dbReference type="GO" id="GO:0031671">
    <property type="term" value="P:primary cell septum biogenesis"/>
    <property type="evidence" value="ECO:0000315"/>
    <property type="project" value="SGD"/>
</dbReference>
<dbReference type="GO" id="GO:0072741">
    <property type="term" value="P:protein localization to cell division site"/>
    <property type="evidence" value="ECO:0000316"/>
    <property type="project" value="SGD"/>
</dbReference>
<dbReference type="GO" id="GO:0031991">
    <property type="term" value="P:regulation of actomyosin contractile ring contraction"/>
    <property type="evidence" value="ECO:0000303"/>
    <property type="project" value="ComplexPortal"/>
</dbReference>
<dbReference type="GO" id="GO:1903338">
    <property type="term" value="P:regulation of cell wall organization or biogenesis"/>
    <property type="evidence" value="ECO:0000303"/>
    <property type="project" value="ComplexPortal"/>
</dbReference>
<dbReference type="GO" id="GO:0032465">
    <property type="term" value="P:regulation of cytokinesis"/>
    <property type="evidence" value="ECO:0000303"/>
    <property type="project" value="ComplexPortal"/>
</dbReference>
<dbReference type="GO" id="GO:1903471">
    <property type="term" value="P:regulation of mitotic actomyosin contractile ring contraction"/>
    <property type="evidence" value="ECO:0000315"/>
    <property type="project" value="SGD"/>
</dbReference>
<dbReference type="CDD" id="cd00174">
    <property type="entry name" value="SH3"/>
    <property type="match status" value="1"/>
</dbReference>
<dbReference type="DisProt" id="DP02589"/>
<dbReference type="FunFam" id="1.20.1270.60:FF:000103">
    <property type="entry name" value="Hof1p"/>
    <property type="match status" value="1"/>
</dbReference>
<dbReference type="Gene3D" id="1.20.1270.60">
    <property type="entry name" value="Arfaptin homology (AH) domain/BAR domain"/>
    <property type="match status" value="1"/>
</dbReference>
<dbReference type="Gene3D" id="2.30.30.40">
    <property type="entry name" value="SH3 Domains"/>
    <property type="match status" value="1"/>
</dbReference>
<dbReference type="InterPro" id="IPR027267">
    <property type="entry name" value="AH/BAR_dom_sf"/>
</dbReference>
<dbReference type="InterPro" id="IPR031160">
    <property type="entry name" value="F_BAR"/>
</dbReference>
<dbReference type="InterPro" id="IPR001060">
    <property type="entry name" value="FCH_dom"/>
</dbReference>
<dbReference type="InterPro" id="IPR036028">
    <property type="entry name" value="SH3-like_dom_sf"/>
</dbReference>
<dbReference type="InterPro" id="IPR001452">
    <property type="entry name" value="SH3_domain"/>
</dbReference>
<dbReference type="PANTHER" id="PTHR23065:SF7">
    <property type="entry name" value="NOSTRIN, ISOFORM H"/>
    <property type="match status" value="1"/>
</dbReference>
<dbReference type="PANTHER" id="PTHR23065">
    <property type="entry name" value="PROLINE-SERINE-THREONINE PHOSPHATASE INTERACTING PROTEIN 1"/>
    <property type="match status" value="1"/>
</dbReference>
<dbReference type="Pfam" id="PF00611">
    <property type="entry name" value="FCH"/>
    <property type="match status" value="1"/>
</dbReference>
<dbReference type="SMART" id="SM00055">
    <property type="entry name" value="FCH"/>
    <property type="match status" value="1"/>
</dbReference>
<dbReference type="SMART" id="SM00326">
    <property type="entry name" value="SH3"/>
    <property type="match status" value="1"/>
</dbReference>
<dbReference type="SUPFAM" id="SSF103657">
    <property type="entry name" value="BAR/IMD domain-like"/>
    <property type="match status" value="1"/>
</dbReference>
<dbReference type="SUPFAM" id="SSF50044">
    <property type="entry name" value="SH3-domain"/>
    <property type="match status" value="1"/>
</dbReference>
<dbReference type="PROSITE" id="PS51741">
    <property type="entry name" value="F_BAR"/>
    <property type="match status" value="1"/>
</dbReference>
<dbReference type="PROSITE" id="PS50002">
    <property type="entry name" value="SH3"/>
    <property type="match status" value="1"/>
</dbReference>
<evidence type="ECO:0000255" key="1"/>
<evidence type="ECO:0000255" key="2">
    <source>
        <dbReference type="PROSITE-ProRule" id="PRU00192"/>
    </source>
</evidence>
<evidence type="ECO:0000255" key="3">
    <source>
        <dbReference type="PROSITE-ProRule" id="PRU01077"/>
    </source>
</evidence>
<evidence type="ECO:0000256" key="4">
    <source>
        <dbReference type="SAM" id="MobiDB-lite"/>
    </source>
</evidence>
<evidence type="ECO:0000269" key="5">
    <source>
    </source>
</evidence>
<evidence type="ECO:0000269" key="6">
    <source>
    </source>
</evidence>
<evidence type="ECO:0000269" key="7">
    <source>
    </source>
</evidence>
<evidence type="ECO:0007744" key="8">
    <source>
    </source>
</evidence>
<evidence type="ECO:0007829" key="9">
    <source>
        <dbReference type="PDB" id="4WPE"/>
    </source>
</evidence>
<feature type="chain" id="PRO_0000079750" description="Cytokinesis protein 2">
    <location>
        <begin position="1"/>
        <end position="669"/>
    </location>
</feature>
<feature type="domain" description="F-BAR" evidence="3">
    <location>
        <begin position="1"/>
        <end position="261"/>
    </location>
</feature>
<feature type="domain" description="SH3" evidence="2">
    <location>
        <begin position="599"/>
        <end position="667"/>
    </location>
</feature>
<feature type="region of interest" description="Disordered" evidence="4">
    <location>
        <begin position="372"/>
        <end position="518"/>
    </location>
</feature>
<feature type="coiled-coil region" evidence="1">
    <location>
        <begin position="134"/>
        <end position="200"/>
    </location>
</feature>
<feature type="compositionally biased region" description="Basic and acidic residues" evidence="4">
    <location>
        <begin position="381"/>
        <end position="391"/>
    </location>
</feature>
<feature type="compositionally biased region" description="Basic and acidic residues" evidence="4">
    <location>
        <begin position="397"/>
        <end position="413"/>
    </location>
</feature>
<feature type="compositionally biased region" description="Low complexity" evidence="4">
    <location>
        <begin position="421"/>
        <end position="431"/>
    </location>
</feature>
<feature type="compositionally biased region" description="Low complexity" evidence="4">
    <location>
        <begin position="445"/>
        <end position="455"/>
    </location>
</feature>
<feature type="modified residue" description="Phosphoserine" evidence="8">
    <location>
        <position position="337"/>
    </location>
</feature>
<feature type="modified residue" description="Phosphoserine" evidence="8">
    <location>
        <position position="366"/>
    </location>
</feature>
<feature type="modified residue" description="Phosphoserine" evidence="8">
    <location>
        <position position="421"/>
    </location>
</feature>
<feature type="helix" evidence="9">
    <location>
        <begin position="5"/>
        <end position="8"/>
    </location>
</feature>
<feature type="helix" evidence="9">
    <location>
        <begin position="15"/>
        <end position="29"/>
    </location>
</feature>
<feature type="helix" evidence="9">
    <location>
        <begin position="31"/>
        <end position="65"/>
    </location>
</feature>
<feature type="helix" evidence="9">
    <location>
        <begin position="70"/>
        <end position="99"/>
    </location>
</feature>
<feature type="helix" evidence="9">
    <location>
        <begin position="102"/>
        <end position="156"/>
    </location>
</feature>
<feature type="helix" evidence="9">
    <location>
        <begin position="158"/>
        <end position="160"/>
    </location>
</feature>
<feature type="helix" evidence="9">
    <location>
        <begin position="164"/>
        <end position="253"/>
    </location>
</feature>
<feature type="helix" evidence="9">
    <location>
        <begin position="258"/>
        <end position="269"/>
    </location>
</feature>
<protein>
    <recommendedName>
        <fullName>Cytokinesis protein 2</fullName>
    </recommendedName>
    <alternativeName>
        <fullName>Homolog of CDC15 protein 1</fullName>
    </alternativeName>
</protein>
<gene>
    <name type="primary">HOF1</name>
    <name type="synonym">CYK2</name>
    <name type="ordered locus">YMR032W</name>
    <name type="ORF">YM9973.05</name>
</gene>
<name>CYK2_YEAST</name>